<comment type="function">
    <text>Cadherins are calcium-dependent cell adhesion proteins. They preferentially interact with themselves in a homophilic manner in connecting cells; cadherins may thus contribute to the sorting of heterogeneous cell types. May act as a negative regulator of neural cell growth.</text>
</comment>
<comment type="subunit">
    <text evidence="5">By contrast to classical cadherins, homodimerization in trans is not mediated by cadherin EC1 domain strand-swapping, but instead through a homophilic adhesive interface which joins two elongated EC1-EC2 domains through a region near their Ca2+-binding sites to form a tetrahedral, X-like shape.</text>
</comment>
<comment type="subcellular location">
    <subcellularLocation>
        <location evidence="6">Cell membrane</location>
        <topology evidence="2">Lipid-anchor</topology>
        <topology evidence="2">GPI-anchor</topology>
    </subcellularLocation>
    <subcellularLocation>
        <location evidence="6">Cytoplasm</location>
    </subcellularLocation>
</comment>
<comment type="domain">
    <text evidence="1">Three calcium ions are usually bound at the interface of each cadherin domain and rigidify the connections, imparting a strong curvature to the full-length ectodomain.</text>
</comment>
<dbReference type="EMBL" id="AB022100">
    <property type="protein sequence ID" value="BAA76677.1"/>
    <property type="molecule type" value="mRNA"/>
</dbReference>
<dbReference type="EMBL" id="AK039438">
    <property type="protein sequence ID" value="BAC30347.1"/>
    <property type="molecule type" value="mRNA"/>
</dbReference>
<dbReference type="EMBL" id="AK048724">
    <property type="protein sequence ID" value="BAC33435.1"/>
    <property type="molecule type" value="mRNA"/>
</dbReference>
<dbReference type="EMBL" id="AK134649">
    <property type="protein sequence ID" value="BAE22225.1"/>
    <property type="molecule type" value="mRNA"/>
</dbReference>
<dbReference type="EMBL" id="CH466525">
    <property type="protein sequence ID" value="EDL11590.1"/>
    <property type="molecule type" value="Genomic_DNA"/>
</dbReference>
<dbReference type="CCDS" id="CCDS52682.1"/>
<dbReference type="RefSeq" id="NP_062681.2">
    <property type="nucleotide sequence ID" value="NM_019707.5"/>
</dbReference>
<dbReference type="PDB" id="3K5R">
    <property type="method" value="X-ray"/>
    <property type="resolution" value="2.00 A"/>
    <property type="chains" value="A/B=140-355"/>
</dbReference>
<dbReference type="PDB" id="3K6F">
    <property type="method" value="X-ray"/>
    <property type="resolution" value="1.81 A"/>
    <property type="chains" value="A/B=140-237"/>
</dbReference>
<dbReference type="PDBsum" id="3K5R"/>
<dbReference type="PDBsum" id="3K6F"/>
<dbReference type="SMR" id="Q9WTR5"/>
<dbReference type="BioGRID" id="198633">
    <property type="interactions" value="2"/>
</dbReference>
<dbReference type="FunCoup" id="Q9WTR5">
    <property type="interactions" value="293"/>
</dbReference>
<dbReference type="IntAct" id="Q9WTR5">
    <property type="interactions" value="2"/>
</dbReference>
<dbReference type="STRING" id="10090.ENSMUSP00000113527"/>
<dbReference type="GlyConnect" id="2166">
    <property type="glycosylation" value="21 N-Linked glycans (4 sites)"/>
</dbReference>
<dbReference type="GlyCosmos" id="Q9WTR5">
    <property type="glycosylation" value="8 sites, 20 glycans"/>
</dbReference>
<dbReference type="GlyGen" id="Q9WTR5">
    <property type="glycosylation" value="11 sites, 24 N-linked glycans (8 sites), 1 O-linked glycan (1 site)"/>
</dbReference>
<dbReference type="iPTMnet" id="Q9WTR5"/>
<dbReference type="PhosphoSitePlus" id="Q9WTR5"/>
<dbReference type="SwissPalm" id="Q9WTR5"/>
<dbReference type="CPTAC" id="non-CPTAC-3381"/>
<dbReference type="jPOST" id="Q9WTR5"/>
<dbReference type="PaxDb" id="10090-ENSMUSP00000113527"/>
<dbReference type="PeptideAtlas" id="Q9WTR5"/>
<dbReference type="ProteomicsDB" id="265416"/>
<dbReference type="Antibodypedia" id="667">
    <property type="antibodies" value="643 antibodies from 41 providers"/>
</dbReference>
<dbReference type="DNASU" id="12554"/>
<dbReference type="Ensembl" id="ENSMUST00000117160.2">
    <property type="protein sequence ID" value="ENSMUSP00000113527.2"/>
    <property type="gene ID" value="ENSMUSG00000031841.20"/>
</dbReference>
<dbReference type="GeneID" id="12554"/>
<dbReference type="KEGG" id="mmu:12554"/>
<dbReference type="UCSC" id="uc009npl.1">
    <property type="organism name" value="mouse"/>
</dbReference>
<dbReference type="AGR" id="MGI:99551"/>
<dbReference type="CTD" id="1012"/>
<dbReference type="MGI" id="MGI:99551">
    <property type="gene designation" value="Cdh13"/>
</dbReference>
<dbReference type="VEuPathDB" id="HostDB:ENSMUSG00000031841"/>
<dbReference type="eggNOG" id="KOG3594">
    <property type="taxonomic scope" value="Eukaryota"/>
</dbReference>
<dbReference type="GeneTree" id="ENSGT00940000155218"/>
<dbReference type="HOGENOM" id="CLU_005284_5_1_1"/>
<dbReference type="InParanoid" id="Q9WTR5"/>
<dbReference type="OMA" id="QVCICKK"/>
<dbReference type="OrthoDB" id="9933746at2759"/>
<dbReference type="PhylomeDB" id="Q9WTR5"/>
<dbReference type="TreeFam" id="TF316817"/>
<dbReference type="Reactome" id="R-MMU-418990">
    <property type="pathway name" value="Adherens junctions interactions"/>
</dbReference>
<dbReference type="BioGRID-ORCS" id="12554">
    <property type="hits" value="0 hits in 78 CRISPR screens"/>
</dbReference>
<dbReference type="CD-CODE" id="CE726F99">
    <property type="entry name" value="Postsynaptic density"/>
</dbReference>
<dbReference type="ChiTaRS" id="Cdh13">
    <property type="organism name" value="mouse"/>
</dbReference>
<dbReference type="EvolutionaryTrace" id="Q9WTR5"/>
<dbReference type="PRO" id="PR:Q9WTR5"/>
<dbReference type="Proteomes" id="UP000000589">
    <property type="component" value="Chromosome 8"/>
</dbReference>
<dbReference type="RNAct" id="Q9WTR5">
    <property type="molecule type" value="protein"/>
</dbReference>
<dbReference type="Bgee" id="ENSMUSG00000031841">
    <property type="expression patterns" value="Expressed in cortical plate and 242 other cell types or tissues"/>
</dbReference>
<dbReference type="GO" id="GO:0005901">
    <property type="term" value="C:caveola"/>
    <property type="evidence" value="ECO:0007669"/>
    <property type="project" value="Ensembl"/>
</dbReference>
<dbReference type="GO" id="GO:0009897">
    <property type="term" value="C:external side of plasma membrane"/>
    <property type="evidence" value="ECO:0000314"/>
    <property type="project" value="MGI"/>
</dbReference>
<dbReference type="GO" id="GO:0005615">
    <property type="term" value="C:extracellular space"/>
    <property type="evidence" value="ECO:0007669"/>
    <property type="project" value="Ensembl"/>
</dbReference>
<dbReference type="GO" id="GO:0098982">
    <property type="term" value="C:GABA-ergic synapse"/>
    <property type="evidence" value="ECO:0007669"/>
    <property type="project" value="Ensembl"/>
</dbReference>
<dbReference type="GO" id="GO:0043005">
    <property type="term" value="C:neuron projection"/>
    <property type="evidence" value="ECO:0007669"/>
    <property type="project" value="Ensembl"/>
</dbReference>
<dbReference type="GO" id="GO:0048471">
    <property type="term" value="C:perinuclear region of cytoplasm"/>
    <property type="evidence" value="ECO:0007669"/>
    <property type="project" value="Ensembl"/>
</dbReference>
<dbReference type="GO" id="GO:0005886">
    <property type="term" value="C:plasma membrane"/>
    <property type="evidence" value="ECO:0000314"/>
    <property type="project" value="MGI"/>
</dbReference>
<dbReference type="GO" id="GO:0055100">
    <property type="term" value="F:adiponectin binding"/>
    <property type="evidence" value="ECO:0000314"/>
    <property type="project" value="BHF-UCL"/>
</dbReference>
<dbReference type="GO" id="GO:0045296">
    <property type="term" value="F:cadherin binding"/>
    <property type="evidence" value="ECO:0007669"/>
    <property type="project" value="Ensembl"/>
</dbReference>
<dbReference type="GO" id="GO:0005509">
    <property type="term" value="F:calcium ion binding"/>
    <property type="evidence" value="ECO:0007669"/>
    <property type="project" value="InterPro"/>
</dbReference>
<dbReference type="GO" id="GO:0042802">
    <property type="term" value="F:identical protein binding"/>
    <property type="evidence" value="ECO:0000353"/>
    <property type="project" value="MGI"/>
</dbReference>
<dbReference type="GO" id="GO:0030169">
    <property type="term" value="F:low-density lipoprotein particle binding"/>
    <property type="evidence" value="ECO:0007669"/>
    <property type="project" value="Ensembl"/>
</dbReference>
<dbReference type="GO" id="GO:0016339">
    <property type="term" value="P:calcium-dependent cell-cell adhesion via plasma membrane cell adhesion molecules"/>
    <property type="evidence" value="ECO:0007669"/>
    <property type="project" value="Ensembl"/>
</dbReference>
<dbReference type="GO" id="GO:0097237">
    <property type="term" value="P:cellular response to toxic substance"/>
    <property type="evidence" value="ECO:0007669"/>
    <property type="project" value="Ensembl"/>
</dbReference>
<dbReference type="GO" id="GO:0071466">
    <property type="term" value="P:cellular response to xenobiotic stimulus"/>
    <property type="evidence" value="ECO:0007669"/>
    <property type="project" value="Ensembl"/>
</dbReference>
<dbReference type="GO" id="GO:0043542">
    <property type="term" value="P:endothelial cell migration"/>
    <property type="evidence" value="ECO:0007669"/>
    <property type="project" value="Ensembl"/>
</dbReference>
<dbReference type="GO" id="GO:0007156">
    <property type="term" value="P:homophilic cell adhesion via plasma membrane adhesion molecules"/>
    <property type="evidence" value="ECO:0007669"/>
    <property type="project" value="Ensembl"/>
</dbReference>
<dbReference type="GO" id="GO:0043616">
    <property type="term" value="P:keratinocyte proliferation"/>
    <property type="evidence" value="ECO:0007669"/>
    <property type="project" value="Ensembl"/>
</dbReference>
<dbReference type="GO" id="GO:0030032">
    <property type="term" value="P:lamellipodium assembly"/>
    <property type="evidence" value="ECO:0007669"/>
    <property type="project" value="Ensembl"/>
</dbReference>
<dbReference type="GO" id="GO:0051668">
    <property type="term" value="P:localization within membrane"/>
    <property type="evidence" value="ECO:0007669"/>
    <property type="project" value="Ensembl"/>
</dbReference>
<dbReference type="GO" id="GO:0055096">
    <property type="term" value="P:low-density lipoprotein particle mediated signaling"/>
    <property type="evidence" value="ECO:0007669"/>
    <property type="project" value="Ensembl"/>
</dbReference>
<dbReference type="GO" id="GO:0007162">
    <property type="term" value="P:negative regulation of cell adhesion"/>
    <property type="evidence" value="ECO:0007669"/>
    <property type="project" value="Ensembl"/>
</dbReference>
<dbReference type="GO" id="GO:0008285">
    <property type="term" value="P:negative regulation of cell population proliferation"/>
    <property type="evidence" value="ECO:0007669"/>
    <property type="project" value="Ensembl"/>
</dbReference>
<dbReference type="GO" id="GO:0050850">
    <property type="term" value="P:positive regulation of calcium-mediated signaling"/>
    <property type="evidence" value="ECO:0007669"/>
    <property type="project" value="Ensembl"/>
</dbReference>
<dbReference type="GO" id="GO:0030335">
    <property type="term" value="P:positive regulation of cell migration"/>
    <property type="evidence" value="ECO:0007669"/>
    <property type="project" value="Ensembl"/>
</dbReference>
<dbReference type="GO" id="GO:0001954">
    <property type="term" value="P:positive regulation of cell-matrix adhesion"/>
    <property type="evidence" value="ECO:0007669"/>
    <property type="project" value="Ensembl"/>
</dbReference>
<dbReference type="GO" id="GO:0001938">
    <property type="term" value="P:positive regulation of endothelial cell proliferation"/>
    <property type="evidence" value="ECO:0007669"/>
    <property type="project" value="Ensembl"/>
</dbReference>
<dbReference type="GO" id="GO:0050927">
    <property type="term" value="P:positive regulation of positive chemotaxis"/>
    <property type="evidence" value="ECO:0007669"/>
    <property type="project" value="Ensembl"/>
</dbReference>
<dbReference type="GO" id="GO:0048661">
    <property type="term" value="P:positive regulation of smooth muscle cell proliferation"/>
    <property type="evidence" value="ECO:0007669"/>
    <property type="project" value="Ensembl"/>
</dbReference>
<dbReference type="GO" id="GO:0045944">
    <property type="term" value="P:positive regulation of transcription by RNA polymerase II"/>
    <property type="evidence" value="ECO:0007669"/>
    <property type="project" value="Ensembl"/>
</dbReference>
<dbReference type="GO" id="GO:0016601">
    <property type="term" value="P:Rac protein signal transduction"/>
    <property type="evidence" value="ECO:0007669"/>
    <property type="project" value="Ensembl"/>
</dbReference>
<dbReference type="GO" id="GO:0030100">
    <property type="term" value="P:regulation of endocytosis"/>
    <property type="evidence" value="ECO:0007669"/>
    <property type="project" value="Ensembl"/>
</dbReference>
<dbReference type="GO" id="GO:0042058">
    <property type="term" value="P:regulation of epidermal growth factor receptor signaling pathway"/>
    <property type="evidence" value="ECO:0007669"/>
    <property type="project" value="Ensembl"/>
</dbReference>
<dbReference type="GO" id="GO:0007266">
    <property type="term" value="P:Rho protein signal transduction"/>
    <property type="evidence" value="ECO:0007669"/>
    <property type="project" value="Ensembl"/>
</dbReference>
<dbReference type="GO" id="GO:0002040">
    <property type="term" value="P:sprouting angiogenesis"/>
    <property type="evidence" value="ECO:0007669"/>
    <property type="project" value="Ensembl"/>
</dbReference>
<dbReference type="CDD" id="cd11304">
    <property type="entry name" value="Cadherin_repeat"/>
    <property type="match status" value="5"/>
</dbReference>
<dbReference type="FunFam" id="2.60.40.60:FF:000011">
    <property type="entry name" value="Cadherin 1"/>
    <property type="match status" value="1"/>
</dbReference>
<dbReference type="FunFam" id="2.60.40.60:FF:000095">
    <property type="entry name" value="Cadherin 13"/>
    <property type="match status" value="1"/>
</dbReference>
<dbReference type="FunFam" id="2.60.40.60:FF:000019">
    <property type="entry name" value="Cadherin 2"/>
    <property type="match status" value="1"/>
</dbReference>
<dbReference type="FunFam" id="2.60.40.60:FF:000022">
    <property type="entry name" value="Cadherin 2"/>
    <property type="match status" value="1"/>
</dbReference>
<dbReference type="FunFam" id="2.60.40.60:FF:000031">
    <property type="entry name" value="Cadherin 3"/>
    <property type="match status" value="1"/>
</dbReference>
<dbReference type="FunFam" id="2.60.40.60:FF:000148">
    <property type="entry name" value="cadherin-13 isoform X1"/>
    <property type="match status" value="1"/>
</dbReference>
<dbReference type="Gene3D" id="2.60.40.60">
    <property type="entry name" value="Cadherins"/>
    <property type="match status" value="6"/>
</dbReference>
<dbReference type="InterPro" id="IPR039808">
    <property type="entry name" value="Cadherin"/>
</dbReference>
<dbReference type="InterPro" id="IPR002126">
    <property type="entry name" value="Cadherin-like_dom"/>
</dbReference>
<dbReference type="InterPro" id="IPR015919">
    <property type="entry name" value="Cadherin-like_sf"/>
</dbReference>
<dbReference type="InterPro" id="IPR020894">
    <property type="entry name" value="Cadherin_CS"/>
</dbReference>
<dbReference type="InterPro" id="IPR014868">
    <property type="entry name" value="Cadherin_pro_dom"/>
</dbReference>
<dbReference type="PANTHER" id="PTHR24027:SF80">
    <property type="entry name" value="CADHERIN-13"/>
    <property type="match status" value="1"/>
</dbReference>
<dbReference type="PANTHER" id="PTHR24027">
    <property type="entry name" value="CADHERIN-23"/>
    <property type="match status" value="1"/>
</dbReference>
<dbReference type="Pfam" id="PF00028">
    <property type="entry name" value="Cadherin"/>
    <property type="match status" value="5"/>
</dbReference>
<dbReference type="Pfam" id="PF08758">
    <property type="entry name" value="Cadherin_pro"/>
    <property type="match status" value="1"/>
</dbReference>
<dbReference type="PRINTS" id="PR00205">
    <property type="entry name" value="CADHERIN"/>
</dbReference>
<dbReference type="SMART" id="SM00112">
    <property type="entry name" value="CA"/>
    <property type="match status" value="5"/>
</dbReference>
<dbReference type="SMART" id="SM01055">
    <property type="entry name" value="Cadherin_pro"/>
    <property type="match status" value="1"/>
</dbReference>
<dbReference type="SUPFAM" id="SSF49313">
    <property type="entry name" value="Cadherin-like"/>
    <property type="match status" value="6"/>
</dbReference>
<dbReference type="PROSITE" id="PS00232">
    <property type="entry name" value="CADHERIN_1"/>
    <property type="match status" value="3"/>
</dbReference>
<dbReference type="PROSITE" id="PS50268">
    <property type="entry name" value="CADHERIN_2"/>
    <property type="match status" value="5"/>
</dbReference>
<feature type="signal peptide" evidence="2">
    <location>
        <begin position="1"/>
        <end position="22"/>
    </location>
</feature>
<feature type="propeptide" id="PRO_0000003796" evidence="1">
    <location>
        <begin position="23"/>
        <end position="138"/>
    </location>
</feature>
<feature type="chain" id="PRO_0000003797" description="Cadherin-13">
    <location>
        <begin position="139"/>
        <end position="693"/>
    </location>
</feature>
<feature type="propeptide" id="PRO_0000003798" description="Removed in mature form" evidence="2">
    <location>
        <begin position="694"/>
        <end position="714"/>
    </location>
</feature>
<feature type="domain" description="Cadherin 1" evidence="3">
    <location>
        <begin position="143"/>
        <end position="245"/>
    </location>
</feature>
<feature type="domain" description="Cadherin 2" evidence="3">
    <location>
        <begin position="246"/>
        <end position="363"/>
    </location>
</feature>
<feature type="domain" description="Cadherin 3" evidence="3">
    <location>
        <begin position="364"/>
        <end position="477"/>
    </location>
</feature>
<feature type="domain" description="Cadherin 4" evidence="3">
    <location>
        <begin position="478"/>
        <end position="585"/>
    </location>
</feature>
<feature type="domain" description="Cadherin 5" evidence="3">
    <location>
        <begin position="586"/>
        <end position="680"/>
    </location>
</feature>
<feature type="region of interest" description="Disordered" evidence="4">
    <location>
        <begin position="156"/>
        <end position="183"/>
    </location>
</feature>
<feature type="compositionally biased region" description="Basic and acidic residues" evidence="4">
    <location>
        <begin position="158"/>
        <end position="172"/>
    </location>
</feature>
<feature type="lipid moiety-binding region" description="GPI-anchor amidated glycine" evidence="2">
    <location>
        <position position="693"/>
    </location>
</feature>
<feature type="glycosylation site" description="N-linked (GlcNAc...) asparagine" evidence="2">
    <location>
        <position position="382"/>
    </location>
</feature>
<feature type="glycosylation site" description="N-linked (GlcNAc...) asparagine" evidence="2">
    <location>
        <position position="489"/>
    </location>
</feature>
<feature type="glycosylation site" description="N-linked (GlcNAc...) asparagine" evidence="2">
    <location>
        <position position="500"/>
    </location>
</feature>
<feature type="glycosylation site" description="N-linked (GlcNAc...) asparagine" evidence="2">
    <location>
        <position position="530"/>
    </location>
</feature>
<feature type="glycosylation site" description="N-linked (GlcNAc...) asparagine" evidence="2">
    <location>
        <position position="598"/>
    </location>
</feature>
<feature type="glycosylation site" description="N-linked (GlcNAc...) asparagine" evidence="2">
    <location>
        <position position="638"/>
    </location>
</feature>
<feature type="glycosylation site" description="N-linked (GlcNAc...) asparagine" evidence="2">
    <location>
        <position position="671"/>
    </location>
</feature>
<feature type="mutagenesis site" description="Strongly inhibits dimerization." evidence="5">
    <original>R</original>
    <variation>E</variation>
    <location>
        <position position="152"/>
    </location>
</feature>
<feature type="sequence conflict" description="In Ref. 1; BAA76677." evidence="7" ref="1">
    <original>L</original>
    <variation>W</variation>
    <location>
        <position position="282"/>
    </location>
</feature>
<feature type="sequence conflict" description="In Ref. 1; BAA76677." evidence="7" ref="1">
    <original>T</original>
    <variation>R</variation>
    <location>
        <position position="371"/>
    </location>
</feature>
<feature type="sequence conflict" description="In Ref. 1; BAA76677." evidence="7" ref="1">
    <original>R</original>
    <variation>K</variation>
    <location>
        <position position="676"/>
    </location>
</feature>
<feature type="strand" evidence="9">
    <location>
        <begin position="145"/>
        <end position="148"/>
    </location>
</feature>
<feature type="strand" evidence="9">
    <location>
        <begin position="153"/>
        <end position="155"/>
    </location>
</feature>
<feature type="strand" evidence="9">
    <location>
        <begin position="157"/>
        <end position="161"/>
    </location>
</feature>
<feature type="strand" evidence="9">
    <location>
        <begin position="172"/>
        <end position="178"/>
    </location>
</feature>
<feature type="turn" evidence="9">
    <location>
        <begin position="179"/>
        <end position="181"/>
    </location>
</feature>
<feature type="strand" evidence="9">
    <location>
        <begin position="182"/>
        <end position="184"/>
    </location>
</feature>
<feature type="strand" evidence="9">
    <location>
        <begin position="187"/>
        <end position="190"/>
    </location>
</feature>
<feature type="turn" evidence="9">
    <location>
        <begin position="192"/>
        <end position="194"/>
    </location>
</feature>
<feature type="strand" evidence="9">
    <location>
        <begin position="196"/>
        <end position="199"/>
    </location>
</feature>
<feature type="turn" evidence="9">
    <location>
        <begin position="205"/>
        <end position="207"/>
    </location>
</feature>
<feature type="strand" evidence="9">
    <location>
        <begin position="209"/>
        <end position="218"/>
    </location>
</feature>
<feature type="strand" evidence="8">
    <location>
        <begin position="220"/>
        <end position="222"/>
    </location>
</feature>
<feature type="strand" evidence="9">
    <location>
        <begin position="224"/>
        <end position="236"/>
    </location>
</feature>
<feature type="strand" evidence="8">
    <location>
        <begin position="249"/>
        <end position="255"/>
    </location>
</feature>
<feature type="strand" evidence="8">
    <location>
        <begin position="263"/>
        <end position="266"/>
    </location>
</feature>
<feature type="strand" evidence="8">
    <location>
        <begin position="272"/>
        <end position="275"/>
    </location>
</feature>
<feature type="helix" evidence="8">
    <location>
        <begin position="277"/>
        <end position="280"/>
    </location>
</feature>
<feature type="strand" evidence="8">
    <location>
        <begin position="282"/>
        <end position="291"/>
    </location>
</feature>
<feature type="strand" evidence="8">
    <location>
        <begin position="298"/>
        <end position="301"/>
    </location>
</feature>
<feature type="turn" evidence="8">
    <location>
        <begin position="303"/>
        <end position="305"/>
    </location>
</feature>
<feature type="strand" evidence="8">
    <location>
        <begin position="307"/>
        <end position="310"/>
    </location>
</feature>
<feature type="helix" evidence="8">
    <location>
        <begin position="314"/>
        <end position="316"/>
    </location>
</feature>
<feature type="helix" evidence="8">
    <location>
        <begin position="319"/>
        <end position="321"/>
    </location>
</feature>
<feature type="strand" evidence="8">
    <location>
        <begin position="325"/>
        <end position="335"/>
    </location>
</feature>
<feature type="turn" evidence="8">
    <location>
        <begin position="339"/>
        <end position="342"/>
    </location>
</feature>
<feature type="strand" evidence="8">
    <location>
        <begin position="344"/>
        <end position="354"/>
    </location>
</feature>
<name>CAD13_MOUSE</name>
<proteinExistence type="evidence at protein level"/>
<keyword id="KW-0002">3D-structure</keyword>
<keyword id="KW-0106">Calcium</keyword>
<keyword id="KW-0130">Cell adhesion</keyword>
<keyword id="KW-1003">Cell membrane</keyword>
<keyword id="KW-0165">Cleavage on pair of basic residues</keyword>
<keyword id="KW-0963">Cytoplasm</keyword>
<keyword id="KW-0325">Glycoprotein</keyword>
<keyword id="KW-0336">GPI-anchor</keyword>
<keyword id="KW-0449">Lipoprotein</keyword>
<keyword id="KW-0472">Membrane</keyword>
<keyword id="KW-0479">Metal-binding</keyword>
<keyword id="KW-1185">Reference proteome</keyword>
<keyword id="KW-0677">Repeat</keyword>
<keyword id="KW-0732">Signal</keyword>
<sequence length="714" mass="78186">MQPRTPLTLCVLLSQVLLVTSADDLECTPGFQRKVLHIHQPAEFIEDQPVLNLTFNDCKGNEKLHYEVSSPHFKVNSDGTLVALRNITAVGRTLFVHARTPHAEDMAELVIVGGKDIQGSLQDIFKFARTSPVPRQKRSIVVSPILIPENQRQPFPRDVGKVVDSDRPEGSKFRLTGKGVDQDPKGTFRINENTGSVSVTRTLDRETIATYQLYVETTDASGKTLEGPVPLEVIVIDQNDNRPIFREGPYIGHVMEGSPTGTTVMRMTAFDADDPATDNALLRYNIRQQTPDKPSPNMFYIDPEKGDIVTVVSPALLDRETLENPKYELIIEAQDMAGLDVGLTGTATATIVIDDKNDHSPKFTKKEFQATVEEGAVGVIVNLTVEDKDDPTTGAWRAAYTIINGNPGQSFEIHTNPQTNEGMLSVVKPLDYEISAFHTLLIKVENEDPLVPDVSYGPSSTATVHITVLDVNEGPVFYPDPMMVTKQENISVGSVLLTVNATDPDSLQHQTIRYSIYKDPAGWLSINPINGTVDTTAVLDRESPFVHNSVYTALFLAIDSGNPPATGTGTLLITLEDINDNAPVIYPTVAEVCDDARNLSVVILGASDKDLHPNTDPFKFEIHKQTVPDKVWKISKINNTHALVSLLQNLNKANYNLPIMVTDSGKPPMTNITDLRVQVCSCKNSKVDCNGAGALHLSLSLLLLFSLLSLLSGL</sequence>
<evidence type="ECO:0000250" key="1"/>
<evidence type="ECO:0000255" key="2"/>
<evidence type="ECO:0000255" key="3">
    <source>
        <dbReference type="PROSITE-ProRule" id="PRU00043"/>
    </source>
</evidence>
<evidence type="ECO:0000256" key="4">
    <source>
        <dbReference type="SAM" id="MobiDB-lite"/>
    </source>
</evidence>
<evidence type="ECO:0000269" key="5">
    <source>
    </source>
</evidence>
<evidence type="ECO:0000269" key="6">
    <source>
    </source>
</evidence>
<evidence type="ECO:0000305" key="7"/>
<evidence type="ECO:0007829" key="8">
    <source>
        <dbReference type="PDB" id="3K5R"/>
    </source>
</evidence>
<evidence type="ECO:0007829" key="9">
    <source>
        <dbReference type="PDB" id="3K6F"/>
    </source>
</evidence>
<accession>Q9WTR5</accession>
<accession>Q8BG11</accession>
<protein>
    <recommendedName>
        <fullName>Cadherin-13</fullName>
    </recommendedName>
    <alternativeName>
        <fullName>Heart cadherin</fullName>
        <shortName>H-cadherin</shortName>
    </alternativeName>
    <alternativeName>
        <fullName>Truncated cadherin</fullName>
        <shortName>T-cad</shortName>
        <shortName>T-cadherin</shortName>
    </alternativeName>
</protein>
<organism>
    <name type="scientific">Mus musculus</name>
    <name type="common">Mouse</name>
    <dbReference type="NCBI Taxonomy" id="10090"/>
    <lineage>
        <taxon>Eukaryota</taxon>
        <taxon>Metazoa</taxon>
        <taxon>Chordata</taxon>
        <taxon>Craniata</taxon>
        <taxon>Vertebrata</taxon>
        <taxon>Euteleostomi</taxon>
        <taxon>Mammalia</taxon>
        <taxon>Eutheria</taxon>
        <taxon>Euarchontoglires</taxon>
        <taxon>Glires</taxon>
        <taxon>Rodentia</taxon>
        <taxon>Myomorpha</taxon>
        <taxon>Muroidea</taxon>
        <taxon>Muridae</taxon>
        <taxon>Murinae</taxon>
        <taxon>Mus</taxon>
        <taxon>Mus</taxon>
    </lineage>
</organism>
<gene>
    <name type="primary">Cdh13</name>
</gene>
<reference key="1">
    <citation type="journal article" date="2000" name="J. Neurochem.">
        <title>Expression of T-cadherin (CDH13, H-Cadherin) in human brain and its characteristics as a negative growth regulator of epidermal growth factor in neuroblastoma cells.</title>
        <authorList>
            <person name="Takeuchi T."/>
            <person name="Misaki A."/>
            <person name="Liang S.-B."/>
            <person name="Tachibana A."/>
            <person name="Hayashi N."/>
            <person name="Sonobe H."/>
            <person name="Ohtsuki Y."/>
        </authorList>
    </citation>
    <scope>NUCLEOTIDE SEQUENCE [MRNA]</scope>
    <source>
        <tissue>Brain</tissue>
        <tissue>Heart</tissue>
    </source>
</reference>
<reference key="2">
    <citation type="journal article" date="2005" name="Science">
        <title>The transcriptional landscape of the mammalian genome.</title>
        <authorList>
            <person name="Carninci P."/>
            <person name="Kasukawa T."/>
            <person name="Katayama S."/>
            <person name="Gough J."/>
            <person name="Frith M.C."/>
            <person name="Maeda N."/>
            <person name="Oyama R."/>
            <person name="Ravasi T."/>
            <person name="Lenhard B."/>
            <person name="Wells C."/>
            <person name="Kodzius R."/>
            <person name="Shimokawa K."/>
            <person name="Bajic V.B."/>
            <person name="Brenner S.E."/>
            <person name="Batalov S."/>
            <person name="Forrest A.R."/>
            <person name="Zavolan M."/>
            <person name="Davis M.J."/>
            <person name="Wilming L.G."/>
            <person name="Aidinis V."/>
            <person name="Allen J.E."/>
            <person name="Ambesi-Impiombato A."/>
            <person name="Apweiler R."/>
            <person name="Aturaliya R.N."/>
            <person name="Bailey T.L."/>
            <person name="Bansal M."/>
            <person name="Baxter L."/>
            <person name="Beisel K.W."/>
            <person name="Bersano T."/>
            <person name="Bono H."/>
            <person name="Chalk A.M."/>
            <person name="Chiu K.P."/>
            <person name="Choudhary V."/>
            <person name="Christoffels A."/>
            <person name="Clutterbuck D.R."/>
            <person name="Crowe M.L."/>
            <person name="Dalla E."/>
            <person name="Dalrymple B.P."/>
            <person name="de Bono B."/>
            <person name="Della Gatta G."/>
            <person name="di Bernardo D."/>
            <person name="Down T."/>
            <person name="Engstrom P."/>
            <person name="Fagiolini M."/>
            <person name="Faulkner G."/>
            <person name="Fletcher C.F."/>
            <person name="Fukushima T."/>
            <person name="Furuno M."/>
            <person name="Futaki S."/>
            <person name="Gariboldi M."/>
            <person name="Georgii-Hemming P."/>
            <person name="Gingeras T.R."/>
            <person name="Gojobori T."/>
            <person name="Green R.E."/>
            <person name="Gustincich S."/>
            <person name="Harbers M."/>
            <person name="Hayashi Y."/>
            <person name="Hensch T.K."/>
            <person name="Hirokawa N."/>
            <person name="Hill D."/>
            <person name="Huminiecki L."/>
            <person name="Iacono M."/>
            <person name="Ikeo K."/>
            <person name="Iwama A."/>
            <person name="Ishikawa T."/>
            <person name="Jakt M."/>
            <person name="Kanapin A."/>
            <person name="Katoh M."/>
            <person name="Kawasawa Y."/>
            <person name="Kelso J."/>
            <person name="Kitamura H."/>
            <person name="Kitano H."/>
            <person name="Kollias G."/>
            <person name="Krishnan S.P."/>
            <person name="Kruger A."/>
            <person name="Kummerfeld S.K."/>
            <person name="Kurochkin I.V."/>
            <person name="Lareau L.F."/>
            <person name="Lazarevic D."/>
            <person name="Lipovich L."/>
            <person name="Liu J."/>
            <person name="Liuni S."/>
            <person name="McWilliam S."/>
            <person name="Madan Babu M."/>
            <person name="Madera M."/>
            <person name="Marchionni L."/>
            <person name="Matsuda H."/>
            <person name="Matsuzawa S."/>
            <person name="Miki H."/>
            <person name="Mignone F."/>
            <person name="Miyake S."/>
            <person name="Morris K."/>
            <person name="Mottagui-Tabar S."/>
            <person name="Mulder N."/>
            <person name="Nakano N."/>
            <person name="Nakauchi H."/>
            <person name="Ng P."/>
            <person name="Nilsson R."/>
            <person name="Nishiguchi S."/>
            <person name="Nishikawa S."/>
            <person name="Nori F."/>
            <person name="Ohara O."/>
            <person name="Okazaki Y."/>
            <person name="Orlando V."/>
            <person name="Pang K.C."/>
            <person name="Pavan W.J."/>
            <person name="Pavesi G."/>
            <person name="Pesole G."/>
            <person name="Petrovsky N."/>
            <person name="Piazza S."/>
            <person name="Reed J."/>
            <person name="Reid J.F."/>
            <person name="Ring B.Z."/>
            <person name="Ringwald M."/>
            <person name="Rost B."/>
            <person name="Ruan Y."/>
            <person name="Salzberg S.L."/>
            <person name="Sandelin A."/>
            <person name="Schneider C."/>
            <person name="Schoenbach C."/>
            <person name="Sekiguchi K."/>
            <person name="Semple C.A."/>
            <person name="Seno S."/>
            <person name="Sessa L."/>
            <person name="Sheng Y."/>
            <person name="Shibata Y."/>
            <person name="Shimada H."/>
            <person name="Shimada K."/>
            <person name="Silva D."/>
            <person name="Sinclair B."/>
            <person name="Sperling S."/>
            <person name="Stupka E."/>
            <person name="Sugiura K."/>
            <person name="Sultana R."/>
            <person name="Takenaka Y."/>
            <person name="Taki K."/>
            <person name="Tammoja K."/>
            <person name="Tan S.L."/>
            <person name="Tang S."/>
            <person name="Taylor M.S."/>
            <person name="Tegner J."/>
            <person name="Teichmann S.A."/>
            <person name="Ueda H.R."/>
            <person name="van Nimwegen E."/>
            <person name="Verardo R."/>
            <person name="Wei C.L."/>
            <person name="Yagi K."/>
            <person name="Yamanishi H."/>
            <person name="Zabarovsky E."/>
            <person name="Zhu S."/>
            <person name="Zimmer A."/>
            <person name="Hide W."/>
            <person name="Bult C."/>
            <person name="Grimmond S.M."/>
            <person name="Teasdale R.D."/>
            <person name="Liu E.T."/>
            <person name="Brusic V."/>
            <person name="Quackenbush J."/>
            <person name="Wahlestedt C."/>
            <person name="Mattick J.S."/>
            <person name="Hume D.A."/>
            <person name="Kai C."/>
            <person name="Sasaki D."/>
            <person name="Tomaru Y."/>
            <person name="Fukuda S."/>
            <person name="Kanamori-Katayama M."/>
            <person name="Suzuki M."/>
            <person name="Aoki J."/>
            <person name="Arakawa T."/>
            <person name="Iida J."/>
            <person name="Imamura K."/>
            <person name="Itoh M."/>
            <person name="Kato T."/>
            <person name="Kawaji H."/>
            <person name="Kawagashira N."/>
            <person name="Kawashima T."/>
            <person name="Kojima M."/>
            <person name="Kondo S."/>
            <person name="Konno H."/>
            <person name="Nakano K."/>
            <person name="Ninomiya N."/>
            <person name="Nishio T."/>
            <person name="Okada M."/>
            <person name="Plessy C."/>
            <person name="Shibata K."/>
            <person name="Shiraki T."/>
            <person name="Suzuki S."/>
            <person name="Tagami M."/>
            <person name="Waki K."/>
            <person name="Watahiki A."/>
            <person name="Okamura-Oho Y."/>
            <person name="Suzuki H."/>
            <person name="Kawai J."/>
            <person name="Hayashizaki Y."/>
        </authorList>
    </citation>
    <scope>NUCLEOTIDE SEQUENCE [LARGE SCALE MRNA]</scope>
    <source>
        <strain>C57BL/6J</strain>
        <tissue>Cerebellum</tissue>
        <tissue>Medulla oblongata</tissue>
        <tissue>Spinal cord</tissue>
    </source>
</reference>
<reference key="3">
    <citation type="submission" date="2005-07" db="EMBL/GenBank/DDBJ databases">
        <authorList>
            <person name="Mural R.J."/>
            <person name="Adams M.D."/>
            <person name="Myers E.W."/>
            <person name="Smith H.O."/>
            <person name="Venter J.C."/>
        </authorList>
    </citation>
    <scope>NUCLEOTIDE SEQUENCE [LARGE SCALE GENOMIC DNA]</scope>
</reference>
<reference key="4">
    <citation type="journal article" date="2010" name="Cell">
        <title>A tissue-specific atlas of mouse protein phosphorylation and expression.</title>
        <authorList>
            <person name="Huttlin E.L."/>
            <person name="Jedrychowski M.P."/>
            <person name="Elias J.E."/>
            <person name="Goswami T."/>
            <person name="Rad R."/>
            <person name="Beausoleil S.A."/>
            <person name="Villen J."/>
            <person name="Haas W."/>
            <person name="Sowa M.E."/>
            <person name="Gygi S.P."/>
        </authorList>
    </citation>
    <scope>IDENTIFICATION BY MASS SPECTROMETRY [LARGE SCALE ANALYSIS]</scope>
    <source>
        <tissue>Brain</tissue>
        <tissue>Brown adipose tissue</tissue>
        <tissue>Heart</tissue>
        <tissue>Kidney</tissue>
        <tissue>Lung</tissue>
    </source>
</reference>
<reference key="5">
    <citation type="journal article" date="2017" name="Arterioscler. Thromb. Vasc. Biol.">
        <title>Zebrafish Model for Functional Screening of Flow-Responsive Genes.</title>
        <authorList>
            <person name="Serbanovic-Canic J."/>
            <person name="de Luca A."/>
            <person name="Warboys C."/>
            <person name="Ferreira P.F."/>
            <person name="Luong L.A."/>
            <person name="Hsiao S."/>
            <person name="Gauci I."/>
            <person name="Mahmoud M."/>
            <person name="Feng S."/>
            <person name="Souilhol C."/>
            <person name="Bowden N."/>
            <person name="Ashton J.P."/>
            <person name="Walczak H."/>
            <person name="Firmin D."/>
            <person name="Krams R."/>
            <person name="Mason J.C."/>
            <person name="Haskard D.O."/>
            <person name="Sherwin S."/>
            <person name="Ridger V."/>
            <person name="Chico T.J."/>
            <person name="Evans P.C."/>
        </authorList>
    </citation>
    <scope>SUBCELLULAR LOCATION</scope>
</reference>
<reference key="6">
    <citation type="journal article" date="2010" name="Nat. Struct. Mol. Biol.">
        <title>T-cadherin structures reveal a novel adhesive binding mechanism.</title>
        <authorList>
            <person name="Ciatto C."/>
            <person name="Bahna F."/>
            <person name="Zampieri N."/>
            <person name="VanSteenhouse H.C."/>
            <person name="Katsamba P.S."/>
            <person name="Ahlsen G."/>
            <person name="Harrison O.J."/>
            <person name="Brasch J."/>
            <person name="Jin X."/>
            <person name="Posy S."/>
            <person name="Vendome J."/>
            <person name="Ranscht B."/>
            <person name="Jessell T.M."/>
            <person name="Honig B."/>
            <person name="Shapiro L."/>
        </authorList>
    </citation>
    <scope>X-RAY CRYSTALLOGRAPHY (2.0 ANGSTROMS) OF 140-355</scope>
    <scope>SUBUNIT</scope>
    <scope>MUTAGENESIS OF ARG-152</scope>
</reference>